<comment type="function">
    <text evidence="1">Involved in coproporphyrin-dependent heme b biosynthesis. Catalyzes the decarboxylation of Fe-coproporphyrin III (coproheme) to heme b (protoheme IX), the last step of the pathway. The reaction occurs in a stepwise manner with a three-propionate intermediate.</text>
</comment>
<comment type="catalytic activity">
    <reaction evidence="1">
        <text>Fe-coproporphyrin III + 2 H2O2 + 2 H(+) = heme b + 2 CO2 + 4 H2O</text>
        <dbReference type="Rhea" id="RHEA:56516"/>
        <dbReference type="ChEBI" id="CHEBI:15377"/>
        <dbReference type="ChEBI" id="CHEBI:15378"/>
        <dbReference type="ChEBI" id="CHEBI:16240"/>
        <dbReference type="ChEBI" id="CHEBI:16526"/>
        <dbReference type="ChEBI" id="CHEBI:60344"/>
        <dbReference type="ChEBI" id="CHEBI:68438"/>
        <dbReference type="EC" id="1.3.98.5"/>
    </reaction>
    <physiologicalReaction direction="left-to-right" evidence="1">
        <dbReference type="Rhea" id="RHEA:56517"/>
    </physiologicalReaction>
</comment>
<comment type="catalytic activity">
    <reaction evidence="1">
        <text>Fe-coproporphyrin III + H2O2 + H(+) = harderoheme III + CO2 + 2 H2O</text>
        <dbReference type="Rhea" id="RHEA:57940"/>
        <dbReference type="ChEBI" id="CHEBI:15377"/>
        <dbReference type="ChEBI" id="CHEBI:15378"/>
        <dbReference type="ChEBI" id="CHEBI:16240"/>
        <dbReference type="ChEBI" id="CHEBI:16526"/>
        <dbReference type="ChEBI" id="CHEBI:68438"/>
        <dbReference type="ChEBI" id="CHEBI:142463"/>
    </reaction>
    <physiologicalReaction direction="left-to-right" evidence="1">
        <dbReference type="Rhea" id="RHEA:57941"/>
    </physiologicalReaction>
</comment>
<comment type="catalytic activity">
    <reaction evidence="1">
        <text>harderoheme III + H2O2 + H(+) = heme b + CO2 + 2 H2O</text>
        <dbReference type="Rhea" id="RHEA:57944"/>
        <dbReference type="ChEBI" id="CHEBI:15377"/>
        <dbReference type="ChEBI" id="CHEBI:15378"/>
        <dbReference type="ChEBI" id="CHEBI:16240"/>
        <dbReference type="ChEBI" id="CHEBI:16526"/>
        <dbReference type="ChEBI" id="CHEBI:60344"/>
        <dbReference type="ChEBI" id="CHEBI:142463"/>
    </reaction>
    <physiologicalReaction direction="left-to-right" evidence="1">
        <dbReference type="Rhea" id="RHEA:57945"/>
    </physiologicalReaction>
</comment>
<comment type="cofactor">
    <cofactor evidence="1">
        <name>Fe-coproporphyrin III</name>
        <dbReference type="ChEBI" id="CHEBI:68438"/>
    </cofactor>
    <text evidence="1">Fe-coproporphyrin III acts both as a substrate and a redox cofactor.</text>
</comment>
<comment type="pathway">
    <text evidence="1">Porphyrin-containing compound metabolism; protoheme biosynthesis.</text>
</comment>
<comment type="similarity">
    <text evidence="1">Belongs to the ChdC family. Type 1 subfamily.</text>
</comment>
<sequence length="251" mass="28854">MNEAVKTLDGWFCLHDFRSIDWAAWRELNPANQELMLNELSHFLSDMEITKNIGEGEHTIYSILGQKADLVFFTLRDSLEALNEVENRFNKLAIADYLLPTYSYISVVELSNYLASHMAGGEDPYQNKGVRARLYPALPPKKHICFYPMSKKRDGADNWYMLPMDERQKLIRDHGLIGRSYAGKVQQIIGGSIGFDDYEWGVTLFSDDALEFKRIVTEMRFDEASARYAEFGSFFIGNLLPSENLSKLFTM</sequence>
<protein>
    <recommendedName>
        <fullName evidence="1">Coproheme decarboxylase</fullName>
        <ecNumber evidence="1">1.3.98.5</ecNumber>
    </recommendedName>
    <alternativeName>
        <fullName evidence="1">Coproheme III oxidative decarboxylase</fullName>
    </alternativeName>
    <alternativeName>
        <fullName evidence="1">Hydrogen peroxide-dependent heme synthase</fullName>
    </alternativeName>
</protein>
<gene>
    <name evidence="1" type="primary">chdC</name>
    <name type="ordered locus">lwe2132</name>
</gene>
<organism>
    <name type="scientific">Listeria welshimeri serovar 6b (strain ATCC 35897 / DSM 20650 / CCUG 15529 / CIP 8149 / NCTC 11857 / SLCC 5334 / V8)</name>
    <dbReference type="NCBI Taxonomy" id="386043"/>
    <lineage>
        <taxon>Bacteria</taxon>
        <taxon>Bacillati</taxon>
        <taxon>Bacillota</taxon>
        <taxon>Bacilli</taxon>
        <taxon>Bacillales</taxon>
        <taxon>Listeriaceae</taxon>
        <taxon>Listeria</taxon>
    </lineage>
</organism>
<dbReference type="EC" id="1.3.98.5" evidence="1"/>
<dbReference type="EMBL" id="AM263198">
    <property type="protein sequence ID" value="CAK21550.1"/>
    <property type="molecule type" value="Genomic_DNA"/>
</dbReference>
<dbReference type="RefSeq" id="WP_011702890.1">
    <property type="nucleotide sequence ID" value="NC_008555.1"/>
</dbReference>
<dbReference type="SMR" id="A0AKL8"/>
<dbReference type="STRING" id="386043.lwe2132"/>
<dbReference type="GeneID" id="61190032"/>
<dbReference type="KEGG" id="lwe:lwe2132"/>
<dbReference type="eggNOG" id="COG3253">
    <property type="taxonomic scope" value="Bacteria"/>
</dbReference>
<dbReference type="HOGENOM" id="CLU_063226_1_0_9"/>
<dbReference type="OrthoDB" id="9773646at2"/>
<dbReference type="UniPathway" id="UPA00252"/>
<dbReference type="Proteomes" id="UP000000779">
    <property type="component" value="Chromosome"/>
</dbReference>
<dbReference type="GO" id="GO:0020037">
    <property type="term" value="F:heme binding"/>
    <property type="evidence" value="ECO:0007669"/>
    <property type="project" value="InterPro"/>
</dbReference>
<dbReference type="GO" id="GO:0046872">
    <property type="term" value="F:metal ion binding"/>
    <property type="evidence" value="ECO:0007669"/>
    <property type="project" value="UniProtKB-KW"/>
</dbReference>
<dbReference type="GO" id="GO:0016634">
    <property type="term" value="F:oxidoreductase activity, acting on the CH-CH group of donors, oxygen as acceptor"/>
    <property type="evidence" value="ECO:0007669"/>
    <property type="project" value="UniProtKB-UniRule"/>
</dbReference>
<dbReference type="GO" id="GO:0004601">
    <property type="term" value="F:peroxidase activity"/>
    <property type="evidence" value="ECO:0007669"/>
    <property type="project" value="InterPro"/>
</dbReference>
<dbReference type="GO" id="GO:0006785">
    <property type="term" value="P:heme B biosynthetic process"/>
    <property type="evidence" value="ECO:0007669"/>
    <property type="project" value="UniProtKB-UniRule"/>
</dbReference>
<dbReference type="Gene3D" id="3.30.70.1030">
    <property type="entry name" value="Apc35880, domain 1"/>
    <property type="match status" value="2"/>
</dbReference>
<dbReference type="HAMAP" id="MF_01442">
    <property type="entry name" value="Coproheme_decarbox_1"/>
    <property type="match status" value="1"/>
</dbReference>
<dbReference type="InterPro" id="IPR031332">
    <property type="entry name" value="CHDC"/>
</dbReference>
<dbReference type="InterPro" id="IPR010644">
    <property type="entry name" value="ChdC/CLD"/>
</dbReference>
<dbReference type="InterPro" id="IPR011008">
    <property type="entry name" value="Dimeric_a/b-barrel"/>
</dbReference>
<dbReference type="NCBIfam" id="NF008913">
    <property type="entry name" value="PRK12276.1"/>
    <property type="match status" value="1"/>
</dbReference>
<dbReference type="PANTHER" id="PTHR36843:SF1">
    <property type="entry name" value="COPROHEME DECARBOXYLASE"/>
    <property type="match status" value="1"/>
</dbReference>
<dbReference type="PANTHER" id="PTHR36843">
    <property type="entry name" value="HEME-DEPENDENT PEROXIDASE YWFI-RELATED"/>
    <property type="match status" value="1"/>
</dbReference>
<dbReference type="Pfam" id="PF06778">
    <property type="entry name" value="Chlor_dismutase"/>
    <property type="match status" value="1"/>
</dbReference>
<dbReference type="SUPFAM" id="SSF54909">
    <property type="entry name" value="Dimeric alpha+beta barrel"/>
    <property type="match status" value="1"/>
</dbReference>
<proteinExistence type="inferred from homology"/>
<name>CHDC_LISW6</name>
<evidence type="ECO:0000255" key="1">
    <source>
        <dbReference type="HAMAP-Rule" id="MF_01442"/>
    </source>
</evidence>
<accession>A0AKL8</accession>
<keyword id="KW-0349">Heme</keyword>
<keyword id="KW-0350">Heme biosynthesis</keyword>
<keyword id="KW-0408">Iron</keyword>
<keyword id="KW-0479">Metal-binding</keyword>
<keyword id="KW-0560">Oxidoreductase</keyword>
<feature type="chain" id="PRO_0000294043" description="Coproheme decarboxylase">
    <location>
        <begin position="1"/>
        <end position="251"/>
    </location>
</feature>
<feature type="active site" evidence="1">
    <location>
        <position position="147"/>
    </location>
</feature>
<feature type="binding site" evidence="1">
    <location>
        <position position="133"/>
    </location>
    <ligand>
        <name>Fe-coproporphyrin III</name>
        <dbReference type="ChEBI" id="CHEBI:68438"/>
    </ligand>
</feature>
<feature type="binding site" evidence="1">
    <location>
        <begin position="147"/>
        <end position="151"/>
    </location>
    <ligand>
        <name>Fe-coproporphyrin III</name>
        <dbReference type="ChEBI" id="CHEBI:68438"/>
    </ligand>
</feature>
<feature type="binding site" description="axial binding residue" evidence="1">
    <location>
        <position position="174"/>
    </location>
    <ligand>
        <name>Fe-coproporphyrin III</name>
        <dbReference type="ChEBI" id="CHEBI:68438"/>
    </ligand>
    <ligandPart>
        <name>Fe</name>
        <dbReference type="ChEBI" id="CHEBI:18248"/>
    </ligandPart>
</feature>
<feature type="binding site" evidence="1">
    <location>
        <position position="187"/>
    </location>
    <ligand>
        <name>Fe-coproporphyrin III</name>
        <dbReference type="ChEBI" id="CHEBI:68438"/>
    </ligand>
</feature>
<feature type="binding site" evidence="1">
    <location>
        <position position="225"/>
    </location>
    <ligand>
        <name>Fe-coproporphyrin III</name>
        <dbReference type="ChEBI" id="CHEBI:68438"/>
    </ligand>
</feature>
<reference key="1">
    <citation type="journal article" date="2006" name="J. Bacteriol.">
        <title>Whole-genome sequence of Listeria welshimeri reveals common steps in genome reduction with Listeria innocua as compared to Listeria monocytogenes.</title>
        <authorList>
            <person name="Hain T."/>
            <person name="Steinweg C."/>
            <person name="Kuenne C.T."/>
            <person name="Billion A."/>
            <person name="Ghai R."/>
            <person name="Chatterjee S.S."/>
            <person name="Domann E."/>
            <person name="Kaerst U."/>
            <person name="Goesmann A."/>
            <person name="Bekel T."/>
            <person name="Bartels D."/>
            <person name="Kaiser O."/>
            <person name="Meyer F."/>
            <person name="Puehler A."/>
            <person name="Weisshaar B."/>
            <person name="Wehland J."/>
            <person name="Liang C."/>
            <person name="Dandekar T."/>
            <person name="Lampidis R."/>
            <person name="Kreft J."/>
            <person name="Goebel W."/>
            <person name="Chakraborty T."/>
        </authorList>
    </citation>
    <scope>NUCLEOTIDE SEQUENCE [LARGE SCALE GENOMIC DNA]</scope>
    <source>
        <strain>ATCC 35897 / DSM 20650 / CCUG 15529 / CIP 8149 / NCTC 11857 / SLCC 5334 / V8</strain>
    </source>
</reference>